<sequence>MPNFWILENRRSYTSDTCMSRIVKEYKVILKTLASDDPIANPYRGIIESLNPIDETDLSKWEAIISGPSDTPYENHQFRILIEVPSSYPMNPPKISFMQNNILHCNVKSATGEICLNILKPEEWTPVWDLLHCVHAVWRLLREPVCDSPLDVDIGNIIRCGDMSAYQGIVKYFLAERERINNH</sequence>
<feature type="chain" id="PRO_0000082558" description="Ubiquitin-conjugating enzyme E2-21 kDa">
    <location>
        <begin position="1"/>
        <end position="183"/>
    </location>
</feature>
<feature type="domain" description="UBC core" evidence="1">
    <location>
        <begin position="17"/>
        <end position="179"/>
    </location>
</feature>
<feature type="active site" description="Glycyl thioester intermediate" evidence="1 2">
    <location>
        <position position="115"/>
    </location>
</feature>
<feature type="helix" evidence="5">
    <location>
        <begin position="16"/>
        <end position="33"/>
    </location>
</feature>
<feature type="turn" evidence="5">
    <location>
        <begin position="38"/>
        <end position="40"/>
    </location>
</feature>
<feature type="turn" evidence="5">
    <location>
        <begin position="42"/>
        <end position="46"/>
    </location>
</feature>
<feature type="strand" evidence="5">
    <location>
        <begin position="47"/>
        <end position="54"/>
    </location>
</feature>
<feature type="strand" evidence="5">
    <location>
        <begin position="60"/>
        <end position="66"/>
    </location>
</feature>
<feature type="strand" evidence="6">
    <location>
        <begin position="69"/>
        <end position="71"/>
    </location>
</feature>
<feature type="turn" evidence="5">
    <location>
        <begin position="72"/>
        <end position="75"/>
    </location>
</feature>
<feature type="strand" evidence="5">
    <location>
        <begin position="77"/>
        <end position="83"/>
    </location>
</feature>
<feature type="turn" evidence="5">
    <location>
        <begin position="86"/>
        <end position="90"/>
    </location>
</feature>
<feature type="strand" evidence="5">
    <location>
        <begin position="94"/>
        <end position="97"/>
    </location>
</feature>
<feature type="turn" evidence="5">
    <location>
        <begin position="109"/>
        <end position="111"/>
    </location>
</feature>
<feature type="helix" evidence="5">
    <location>
        <begin position="117"/>
        <end position="119"/>
    </location>
</feature>
<feature type="turn" evidence="5">
    <location>
        <begin position="121"/>
        <end position="123"/>
    </location>
</feature>
<feature type="helix" evidence="5">
    <location>
        <begin position="130"/>
        <end position="142"/>
    </location>
</feature>
<feature type="helix" evidence="5">
    <location>
        <begin position="152"/>
        <end position="158"/>
    </location>
</feature>
<feature type="turn" evidence="5">
    <location>
        <begin position="159"/>
        <end position="161"/>
    </location>
</feature>
<feature type="helix" evidence="5">
    <location>
        <begin position="163"/>
        <end position="178"/>
    </location>
</feature>
<accession>P29340</accession>
<accession>D6VUR5</accession>
<keyword id="KW-0002">3D-structure</keyword>
<keyword id="KW-0067">ATP-binding</keyword>
<keyword id="KW-0547">Nucleotide-binding</keyword>
<keyword id="KW-0576">Peroxisome</keyword>
<keyword id="KW-0962">Peroxisome biogenesis</keyword>
<keyword id="KW-1185">Reference proteome</keyword>
<keyword id="KW-0808">Transferase</keyword>
<keyword id="KW-0833">Ubl conjugation pathway</keyword>
<reference key="1">
    <citation type="journal article" date="1992" name="Nature">
        <title>The Pas2 protein essential for peroxisome biogenesis is related to ubiquitin-conjugating enzymes.</title>
        <authorList>
            <person name="Wiebel F.F."/>
            <person name="Kunau W.-H."/>
        </authorList>
    </citation>
    <scope>NUCLEOTIDE SEQUENCE [GENOMIC DNA]</scope>
</reference>
<reference key="2">
    <citation type="journal article" date="1997" name="Nature">
        <title>The nucleotide sequence of Saccharomyces cerevisiae chromosome VII.</title>
        <authorList>
            <person name="Tettelin H."/>
            <person name="Agostoni-Carbone M.L."/>
            <person name="Albermann K."/>
            <person name="Albers M."/>
            <person name="Arroyo J."/>
            <person name="Backes U."/>
            <person name="Barreiros T."/>
            <person name="Bertani I."/>
            <person name="Bjourson A.J."/>
            <person name="Brueckner M."/>
            <person name="Bruschi C.V."/>
            <person name="Carignani G."/>
            <person name="Castagnoli L."/>
            <person name="Cerdan E."/>
            <person name="Clemente M.L."/>
            <person name="Coblenz A."/>
            <person name="Coglievina M."/>
            <person name="Coissac E."/>
            <person name="Defoor E."/>
            <person name="Del Bino S."/>
            <person name="Delius H."/>
            <person name="Delneri D."/>
            <person name="de Wergifosse P."/>
            <person name="Dujon B."/>
            <person name="Durand P."/>
            <person name="Entian K.-D."/>
            <person name="Eraso P."/>
            <person name="Escribano V."/>
            <person name="Fabiani L."/>
            <person name="Fartmann B."/>
            <person name="Feroli F."/>
            <person name="Feuermann M."/>
            <person name="Frontali L."/>
            <person name="Garcia-Gonzalez M."/>
            <person name="Garcia-Saez M.I."/>
            <person name="Goffeau A."/>
            <person name="Guerreiro P."/>
            <person name="Hani J."/>
            <person name="Hansen M."/>
            <person name="Hebling U."/>
            <person name="Hernandez K."/>
            <person name="Heumann K."/>
            <person name="Hilger F."/>
            <person name="Hofmann B."/>
            <person name="Indge K.J."/>
            <person name="James C.M."/>
            <person name="Klima R."/>
            <person name="Koetter P."/>
            <person name="Kramer B."/>
            <person name="Kramer W."/>
            <person name="Lauquin G."/>
            <person name="Leuther H."/>
            <person name="Louis E.J."/>
            <person name="Maillier E."/>
            <person name="Marconi A."/>
            <person name="Martegani E."/>
            <person name="Mazon M.J."/>
            <person name="Mazzoni C."/>
            <person name="McReynolds A.D.K."/>
            <person name="Melchioretto P."/>
            <person name="Mewes H.-W."/>
            <person name="Minenkova O."/>
            <person name="Mueller-Auer S."/>
            <person name="Nawrocki A."/>
            <person name="Netter P."/>
            <person name="Neu R."/>
            <person name="Nombela C."/>
            <person name="Oliver S.G."/>
            <person name="Panzeri L."/>
            <person name="Paoluzi S."/>
            <person name="Plevani P."/>
            <person name="Portetelle D."/>
            <person name="Portillo F."/>
            <person name="Potier S."/>
            <person name="Purnelle B."/>
            <person name="Rieger M."/>
            <person name="Riles L."/>
            <person name="Rinaldi T."/>
            <person name="Robben J."/>
            <person name="Rodrigues-Pousada C."/>
            <person name="Rodriguez-Belmonte E."/>
            <person name="Rodriguez-Torres A.M."/>
            <person name="Rose M."/>
            <person name="Ruzzi M."/>
            <person name="Saliola M."/>
            <person name="Sanchez-Perez M."/>
            <person name="Schaefer B."/>
            <person name="Schaefer M."/>
            <person name="Scharfe M."/>
            <person name="Schmidheini T."/>
            <person name="Schreer A."/>
            <person name="Skala J."/>
            <person name="Souciet J.-L."/>
            <person name="Steensma H.Y."/>
            <person name="Talla E."/>
            <person name="Thierry A."/>
            <person name="Vandenbol M."/>
            <person name="van der Aart Q.J.M."/>
            <person name="Van Dyck L."/>
            <person name="Vanoni M."/>
            <person name="Verhasselt P."/>
            <person name="Voet M."/>
            <person name="Volckaert G."/>
            <person name="Wambutt R."/>
            <person name="Watson M.D."/>
            <person name="Weber N."/>
            <person name="Wedler E."/>
            <person name="Wedler H."/>
            <person name="Wipfli P."/>
            <person name="Wolf K."/>
            <person name="Wright L.F."/>
            <person name="Zaccaria P."/>
            <person name="Zimmermann M."/>
            <person name="Zollner A."/>
            <person name="Kleine K."/>
        </authorList>
    </citation>
    <scope>NUCLEOTIDE SEQUENCE [LARGE SCALE GENOMIC DNA]</scope>
    <source>
        <strain>ATCC 204508 / S288c</strain>
    </source>
</reference>
<reference key="3">
    <citation type="journal article" date="2014" name="G3 (Bethesda)">
        <title>The reference genome sequence of Saccharomyces cerevisiae: Then and now.</title>
        <authorList>
            <person name="Engel S.R."/>
            <person name="Dietrich F.S."/>
            <person name="Fisk D.G."/>
            <person name="Binkley G."/>
            <person name="Balakrishnan R."/>
            <person name="Costanzo M.C."/>
            <person name="Dwight S.S."/>
            <person name="Hitz B.C."/>
            <person name="Karra K."/>
            <person name="Nash R.S."/>
            <person name="Weng S."/>
            <person name="Wong E.D."/>
            <person name="Lloyd P."/>
            <person name="Skrzypek M.S."/>
            <person name="Miyasato S.R."/>
            <person name="Simison M."/>
            <person name="Cherry J.M."/>
        </authorList>
    </citation>
    <scope>GENOME REANNOTATION</scope>
    <source>
        <strain>ATCC 204508 / S288c</strain>
    </source>
</reference>
<reference key="4">
    <citation type="journal article" date="2007" name="Genome Res.">
        <title>Approaching a complete repository of sequence-verified protein-encoding clones for Saccharomyces cerevisiae.</title>
        <authorList>
            <person name="Hu Y."/>
            <person name="Rolfs A."/>
            <person name="Bhullar B."/>
            <person name="Murthy T.V.S."/>
            <person name="Zhu C."/>
            <person name="Berger M.F."/>
            <person name="Camargo A.A."/>
            <person name="Kelley F."/>
            <person name="McCarron S."/>
            <person name="Jepson D."/>
            <person name="Richardson A."/>
            <person name="Raphael J."/>
            <person name="Moreira D."/>
            <person name="Taycher E."/>
            <person name="Zuo D."/>
            <person name="Mohr S."/>
            <person name="Kane M.F."/>
            <person name="Williamson J."/>
            <person name="Simpson A.J.G."/>
            <person name="Bulyk M.L."/>
            <person name="Harlow E."/>
            <person name="Marsischky G."/>
            <person name="Kolodner R.D."/>
            <person name="LaBaer J."/>
        </authorList>
    </citation>
    <scope>NUCLEOTIDE SEQUENCE [GENOMIC DNA]</scope>
    <source>
        <strain>ATCC 204508 / S288c</strain>
    </source>
</reference>
<reference key="5">
    <citation type="journal article" date="2007" name="J. Biol. Chem.">
        <title>A conserved cysteine is essential for Pex4p-dependent ubiquitination of the peroxisomal import receptor Pex5p.</title>
        <authorList>
            <person name="Williams C."/>
            <person name="van den Berg M."/>
            <person name="Sprenger R.R."/>
            <person name="Distel B."/>
        </authorList>
    </citation>
    <scope>FUNCTION</scope>
</reference>
<reference key="6">
    <citation type="journal article" date="2008" name="Biochem. Biophys. Res. Commun.">
        <title>Pex10p functions as an E3 ligase for the Ubc4p-dependent ubiquitination of Pex5p.</title>
        <authorList>
            <person name="Williams C."/>
            <person name="van den Berg M."/>
            <person name="Geers E."/>
            <person name="Distel B."/>
        </authorList>
    </citation>
    <scope>FUNCTION</scope>
</reference>
<organism>
    <name type="scientific">Saccharomyces cerevisiae (strain ATCC 204508 / S288c)</name>
    <name type="common">Baker's yeast</name>
    <dbReference type="NCBI Taxonomy" id="559292"/>
    <lineage>
        <taxon>Eukaryota</taxon>
        <taxon>Fungi</taxon>
        <taxon>Dikarya</taxon>
        <taxon>Ascomycota</taxon>
        <taxon>Saccharomycotina</taxon>
        <taxon>Saccharomycetes</taxon>
        <taxon>Saccharomycetales</taxon>
        <taxon>Saccharomycetaceae</taxon>
        <taxon>Saccharomyces</taxon>
    </lineage>
</organism>
<dbReference type="EC" id="2.3.2.23"/>
<dbReference type="EMBL" id="X65470">
    <property type="protein sequence ID" value="CAA46467.1"/>
    <property type="molecule type" value="Genomic_DNA"/>
</dbReference>
<dbReference type="EMBL" id="Z72918">
    <property type="protein sequence ID" value="CAA97146.1"/>
    <property type="molecule type" value="Genomic_DNA"/>
</dbReference>
<dbReference type="EMBL" id="AY557776">
    <property type="protein sequence ID" value="AAS56102.1"/>
    <property type="molecule type" value="Genomic_DNA"/>
</dbReference>
<dbReference type="EMBL" id="BK006941">
    <property type="protein sequence ID" value="DAA08226.1"/>
    <property type="molecule type" value="Genomic_DNA"/>
</dbReference>
<dbReference type="PIR" id="S29088">
    <property type="entry name" value="S29088"/>
</dbReference>
<dbReference type="RefSeq" id="NP_011649.1">
    <property type="nucleotide sequence ID" value="NM_001181262.1"/>
</dbReference>
<dbReference type="PDB" id="2Y9M">
    <property type="method" value="X-ray"/>
    <property type="resolution" value="2.60 A"/>
    <property type="chains" value="A=15-183"/>
</dbReference>
<dbReference type="PDB" id="2Y9P">
    <property type="method" value="X-ray"/>
    <property type="resolution" value="3.25 A"/>
    <property type="chains" value="A=15-183"/>
</dbReference>
<dbReference type="PDB" id="4BWF">
    <property type="method" value="X-ray"/>
    <property type="resolution" value="3.23 A"/>
    <property type="chains" value="A=15-183"/>
</dbReference>
<dbReference type="PDBsum" id="2Y9M"/>
<dbReference type="PDBsum" id="2Y9P"/>
<dbReference type="PDBsum" id="4BWF"/>
<dbReference type="SMR" id="P29340"/>
<dbReference type="BioGRID" id="33381">
    <property type="interactions" value="206"/>
</dbReference>
<dbReference type="DIP" id="DIP-4411N"/>
<dbReference type="FunCoup" id="P29340">
    <property type="interactions" value="120"/>
</dbReference>
<dbReference type="IntAct" id="P29340">
    <property type="interactions" value="4"/>
</dbReference>
<dbReference type="MINT" id="P29340"/>
<dbReference type="STRING" id="4932.YGR133W"/>
<dbReference type="TCDB" id="3.A.20.1.1">
    <property type="family name" value="the peroxisomal protein importer (ppi) family"/>
</dbReference>
<dbReference type="TCDB" id="3.A.20.1.5">
    <property type="family name" value="the peroxisomal protein importer (ppi) family"/>
</dbReference>
<dbReference type="PaxDb" id="4932-YGR133W"/>
<dbReference type="PeptideAtlas" id="P29340"/>
<dbReference type="EnsemblFungi" id="YGR133W_mRNA">
    <property type="protein sequence ID" value="YGR133W"/>
    <property type="gene ID" value="YGR133W"/>
</dbReference>
<dbReference type="GeneID" id="853034"/>
<dbReference type="KEGG" id="sce:YGR133W"/>
<dbReference type="AGR" id="SGD:S000003365"/>
<dbReference type="SGD" id="S000003365">
    <property type="gene designation" value="PEX4"/>
</dbReference>
<dbReference type="VEuPathDB" id="FungiDB:YGR133W"/>
<dbReference type="eggNOG" id="KOG0417">
    <property type="taxonomic scope" value="Eukaryota"/>
</dbReference>
<dbReference type="GeneTree" id="ENSGT00940000154349"/>
<dbReference type="HOGENOM" id="CLU_030988_13_0_1"/>
<dbReference type="InParanoid" id="P29340"/>
<dbReference type="OMA" id="WRAVMKG"/>
<dbReference type="OrthoDB" id="9973183at2759"/>
<dbReference type="BioCyc" id="YEAST:G3O-30839-MONOMER"/>
<dbReference type="BRENDA" id="2.3.2.23">
    <property type="organism ID" value="984"/>
</dbReference>
<dbReference type="UniPathway" id="UPA00143"/>
<dbReference type="BioGRID-ORCS" id="853034">
    <property type="hits" value="8 hits in 10 CRISPR screens"/>
</dbReference>
<dbReference type="EvolutionaryTrace" id="P29340"/>
<dbReference type="PRO" id="PR:P29340"/>
<dbReference type="Proteomes" id="UP000002311">
    <property type="component" value="Chromosome VII"/>
</dbReference>
<dbReference type="RNAct" id="P29340">
    <property type="molecule type" value="protein"/>
</dbReference>
<dbReference type="GO" id="GO:0005634">
    <property type="term" value="C:nucleus"/>
    <property type="evidence" value="ECO:0000318"/>
    <property type="project" value="GO_Central"/>
</dbReference>
<dbReference type="GO" id="GO:0005777">
    <property type="term" value="C:peroxisome"/>
    <property type="evidence" value="ECO:0000314"/>
    <property type="project" value="SGD"/>
</dbReference>
<dbReference type="GO" id="GO:0005524">
    <property type="term" value="F:ATP binding"/>
    <property type="evidence" value="ECO:0007669"/>
    <property type="project" value="UniProtKB-KW"/>
</dbReference>
<dbReference type="GO" id="GO:0061631">
    <property type="term" value="F:ubiquitin conjugating enzyme activity"/>
    <property type="evidence" value="ECO:0000318"/>
    <property type="project" value="GO_Central"/>
</dbReference>
<dbReference type="GO" id="GO:0004842">
    <property type="term" value="F:ubiquitin-protein transferase activity"/>
    <property type="evidence" value="ECO:0000314"/>
    <property type="project" value="SGD"/>
</dbReference>
<dbReference type="GO" id="GO:0007031">
    <property type="term" value="P:peroxisome organization"/>
    <property type="evidence" value="ECO:0000315"/>
    <property type="project" value="SGD"/>
</dbReference>
<dbReference type="GO" id="GO:0051865">
    <property type="term" value="P:protein autoubiquitination"/>
    <property type="evidence" value="ECO:0000314"/>
    <property type="project" value="SGD"/>
</dbReference>
<dbReference type="GO" id="GO:0016562">
    <property type="term" value="P:protein import into peroxisome matrix, receptor recycling"/>
    <property type="evidence" value="ECO:0000315"/>
    <property type="project" value="SGD"/>
</dbReference>
<dbReference type="GO" id="GO:0006513">
    <property type="term" value="P:protein monoubiquitination"/>
    <property type="evidence" value="ECO:0000314"/>
    <property type="project" value="SGD"/>
</dbReference>
<dbReference type="GO" id="GO:0000209">
    <property type="term" value="P:protein polyubiquitination"/>
    <property type="evidence" value="ECO:0000318"/>
    <property type="project" value="GO_Central"/>
</dbReference>
<dbReference type="GO" id="GO:0016567">
    <property type="term" value="P:protein ubiquitination"/>
    <property type="evidence" value="ECO:0000315"/>
    <property type="project" value="UniProtKB"/>
</dbReference>
<dbReference type="CDD" id="cd23812">
    <property type="entry name" value="UBCc_ScPEX4-like"/>
    <property type="match status" value="1"/>
</dbReference>
<dbReference type="FunFam" id="3.10.110.10:FF:000096">
    <property type="entry name" value="Ubiquitin-conjugating enzyme E2-21 kDa"/>
    <property type="match status" value="1"/>
</dbReference>
<dbReference type="Gene3D" id="3.10.110.10">
    <property type="entry name" value="Ubiquitin Conjugating Enzyme"/>
    <property type="match status" value="1"/>
</dbReference>
<dbReference type="InterPro" id="IPR050113">
    <property type="entry name" value="Ub_conjugating_enzyme"/>
</dbReference>
<dbReference type="InterPro" id="IPR000608">
    <property type="entry name" value="UBQ-conjugat_E2_core"/>
</dbReference>
<dbReference type="InterPro" id="IPR023313">
    <property type="entry name" value="UBQ-conjugating_AS"/>
</dbReference>
<dbReference type="InterPro" id="IPR016135">
    <property type="entry name" value="UBQ-conjugating_enzyme/RWD"/>
</dbReference>
<dbReference type="PANTHER" id="PTHR24067">
    <property type="entry name" value="UBIQUITIN-CONJUGATING ENZYME E2"/>
    <property type="match status" value="1"/>
</dbReference>
<dbReference type="Pfam" id="PF00179">
    <property type="entry name" value="UQ_con"/>
    <property type="match status" value="1"/>
</dbReference>
<dbReference type="SMART" id="SM00212">
    <property type="entry name" value="UBCc"/>
    <property type="match status" value="1"/>
</dbReference>
<dbReference type="SUPFAM" id="SSF54495">
    <property type="entry name" value="UBC-like"/>
    <property type="match status" value="1"/>
</dbReference>
<dbReference type="PROSITE" id="PS00183">
    <property type="entry name" value="UBC_1"/>
    <property type="match status" value="1"/>
</dbReference>
<dbReference type="PROSITE" id="PS50127">
    <property type="entry name" value="UBC_2"/>
    <property type="match status" value="1"/>
</dbReference>
<gene>
    <name type="primary">PEX4</name>
    <name type="synonym">PAS2</name>
    <name type="synonym">UBC10</name>
    <name type="ordered locus">YGR133W</name>
</gene>
<protein>
    <recommendedName>
        <fullName>Ubiquitin-conjugating enzyme E2-21 kDa</fullName>
        <ecNumber>2.3.2.23</ecNumber>
    </recommendedName>
    <alternativeName>
        <fullName>E2 ubiquitin-conjugating enzyme PEX4</fullName>
    </alternativeName>
    <alternativeName>
        <fullName>Peroxin-4</fullName>
    </alternativeName>
    <alternativeName>
        <fullName>Ubiquitin carrier protein</fullName>
    </alternativeName>
    <alternativeName>
        <fullName>Ubiquitin-protein ligase</fullName>
    </alternativeName>
</protein>
<comment type="function">
    <text evidence="1 3 4">Catalyzes the covalent attachment of ubiquitin to other proteins. Essential for peroxisome biogenesis (By similarity) (PubMed:17550898, PubMed:18644345). Required for UBC4-independent ubiquitination of PEX5 (PubMed:17550898, PubMed:18644345).</text>
</comment>
<comment type="catalytic activity">
    <reaction evidence="1 2">
        <text>S-ubiquitinyl-[E1 ubiquitin-activating enzyme]-L-cysteine + [E2 ubiquitin-conjugating enzyme]-L-cysteine = [E1 ubiquitin-activating enzyme]-L-cysteine + S-ubiquitinyl-[E2 ubiquitin-conjugating enzyme]-L-cysteine.</text>
        <dbReference type="EC" id="2.3.2.23"/>
    </reaction>
</comment>
<comment type="pathway">
    <text evidence="1">Protein modification; protein ubiquitination.</text>
</comment>
<comment type="interaction">
    <interactant intactId="EBI-19784">
        <id>P29340</id>
    </interactant>
    <interactant intactId="EBI-20707">
        <id>P39718</id>
        <label>PEX22</label>
    </interactant>
    <organismsDiffer>false</organismsDiffer>
    <experiments>10</experiments>
</comment>
<comment type="subcellular location">
    <subcellularLocation>
        <location>Peroxisome</location>
    </subcellularLocation>
</comment>
<comment type="similarity">
    <text evidence="1">Belongs to the ubiquitin-conjugating enzyme family.</text>
</comment>
<proteinExistence type="evidence at protein level"/>
<evidence type="ECO:0000255" key="1">
    <source>
        <dbReference type="PROSITE-ProRule" id="PRU00388"/>
    </source>
</evidence>
<evidence type="ECO:0000255" key="2">
    <source>
        <dbReference type="PROSITE-ProRule" id="PRU10133"/>
    </source>
</evidence>
<evidence type="ECO:0000269" key="3">
    <source>
    </source>
</evidence>
<evidence type="ECO:0000269" key="4">
    <source>
    </source>
</evidence>
<evidence type="ECO:0007829" key="5">
    <source>
        <dbReference type="PDB" id="2Y9M"/>
    </source>
</evidence>
<evidence type="ECO:0007829" key="6">
    <source>
        <dbReference type="PDB" id="4BWF"/>
    </source>
</evidence>
<name>UBCX_YEAST</name>